<proteinExistence type="inferred from homology"/>
<keyword id="KW-0963">Cytoplasm</keyword>
<keyword id="KW-0489">Methyltransferase</keyword>
<keyword id="KW-0698">rRNA processing</keyword>
<keyword id="KW-0949">S-adenosyl-L-methionine</keyword>
<keyword id="KW-0808">Transferase</keyword>
<dbReference type="EC" id="2.1.1.177" evidence="1"/>
<dbReference type="EMBL" id="CP001157">
    <property type="protein sequence ID" value="ACO77083.1"/>
    <property type="molecule type" value="Genomic_DNA"/>
</dbReference>
<dbReference type="RefSeq" id="WP_012699508.1">
    <property type="nucleotide sequence ID" value="NC_012560.1"/>
</dbReference>
<dbReference type="SMR" id="C1DMQ3"/>
<dbReference type="STRING" id="322710.Avin_08380"/>
<dbReference type="EnsemblBacteria" id="ACO77083">
    <property type="protein sequence ID" value="ACO77083"/>
    <property type="gene ID" value="Avin_08380"/>
</dbReference>
<dbReference type="GeneID" id="88184221"/>
<dbReference type="KEGG" id="avn:Avin_08380"/>
<dbReference type="eggNOG" id="COG1576">
    <property type="taxonomic scope" value="Bacteria"/>
</dbReference>
<dbReference type="HOGENOM" id="CLU_100552_1_0_6"/>
<dbReference type="OrthoDB" id="9806643at2"/>
<dbReference type="Proteomes" id="UP000002424">
    <property type="component" value="Chromosome"/>
</dbReference>
<dbReference type="GO" id="GO:0005737">
    <property type="term" value="C:cytoplasm"/>
    <property type="evidence" value="ECO:0007669"/>
    <property type="project" value="UniProtKB-SubCell"/>
</dbReference>
<dbReference type="GO" id="GO:0070038">
    <property type="term" value="F:rRNA (pseudouridine-N3-)-methyltransferase activity"/>
    <property type="evidence" value="ECO:0007669"/>
    <property type="project" value="UniProtKB-UniRule"/>
</dbReference>
<dbReference type="CDD" id="cd18081">
    <property type="entry name" value="RlmH-like"/>
    <property type="match status" value="1"/>
</dbReference>
<dbReference type="Gene3D" id="3.40.1280.10">
    <property type="match status" value="1"/>
</dbReference>
<dbReference type="HAMAP" id="MF_00658">
    <property type="entry name" value="23SrRNA_methyltr_H"/>
    <property type="match status" value="1"/>
</dbReference>
<dbReference type="InterPro" id="IPR029028">
    <property type="entry name" value="Alpha/beta_knot_MTases"/>
</dbReference>
<dbReference type="InterPro" id="IPR003742">
    <property type="entry name" value="RlmH-like"/>
</dbReference>
<dbReference type="InterPro" id="IPR029026">
    <property type="entry name" value="tRNA_m1G_MTases_N"/>
</dbReference>
<dbReference type="NCBIfam" id="NF000986">
    <property type="entry name" value="PRK00103.1-4"/>
    <property type="match status" value="1"/>
</dbReference>
<dbReference type="NCBIfam" id="TIGR00246">
    <property type="entry name" value="tRNA_RlmH_YbeA"/>
    <property type="match status" value="1"/>
</dbReference>
<dbReference type="PANTHER" id="PTHR33603">
    <property type="entry name" value="METHYLTRANSFERASE"/>
    <property type="match status" value="1"/>
</dbReference>
<dbReference type="PANTHER" id="PTHR33603:SF1">
    <property type="entry name" value="RIBOSOMAL RNA LARGE SUBUNIT METHYLTRANSFERASE H"/>
    <property type="match status" value="1"/>
</dbReference>
<dbReference type="Pfam" id="PF02590">
    <property type="entry name" value="SPOUT_MTase"/>
    <property type="match status" value="1"/>
</dbReference>
<dbReference type="PIRSF" id="PIRSF004505">
    <property type="entry name" value="MT_bac"/>
    <property type="match status" value="1"/>
</dbReference>
<dbReference type="SUPFAM" id="SSF75217">
    <property type="entry name" value="alpha/beta knot"/>
    <property type="match status" value="1"/>
</dbReference>
<organism>
    <name type="scientific">Azotobacter vinelandii (strain DJ / ATCC BAA-1303)</name>
    <dbReference type="NCBI Taxonomy" id="322710"/>
    <lineage>
        <taxon>Bacteria</taxon>
        <taxon>Pseudomonadati</taxon>
        <taxon>Pseudomonadota</taxon>
        <taxon>Gammaproteobacteria</taxon>
        <taxon>Pseudomonadales</taxon>
        <taxon>Pseudomonadaceae</taxon>
        <taxon>Azotobacter</taxon>
    </lineage>
</organism>
<accession>C1DMQ3</accession>
<gene>
    <name evidence="1" type="primary">rlmH</name>
    <name type="ordered locus">Avin_08380</name>
</gene>
<reference key="1">
    <citation type="journal article" date="2009" name="J. Bacteriol.">
        <title>Genome sequence of Azotobacter vinelandii, an obligate aerobe specialized to support diverse anaerobic metabolic processes.</title>
        <authorList>
            <person name="Setubal J.C."/>
            <person name="Dos Santos P."/>
            <person name="Goldman B.S."/>
            <person name="Ertesvaag H."/>
            <person name="Espin G."/>
            <person name="Rubio L.M."/>
            <person name="Valla S."/>
            <person name="Almeida N.F."/>
            <person name="Balasubramanian D."/>
            <person name="Cromes L."/>
            <person name="Curatti L."/>
            <person name="Du Z."/>
            <person name="Godsy E."/>
            <person name="Goodner B."/>
            <person name="Hellner-Burris K."/>
            <person name="Hernandez J.A."/>
            <person name="Houmiel K."/>
            <person name="Imperial J."/>
            <person name="Kennedy C."/>
            <person name="Larson T.J."/>
            <person name="Latreille P."/>
            <person name="Ligon L.S."/>
            <person name="Lu J."/>
            <person name="Maerk M."/>
            <person name="Miller N.M."/>
            <person name="Norton S."/>
            <person name="O'Carroll I.P."/>
            <person name="Paulsen I."/>
            <person name="Raulfs E.C."/>
            <person name="Roemer R."/>
            <person name="Rosser J."/>
            <person name="Segura D."/>
            <person name="Slater S."/>
            <person name="Stricklin S.L."/>
            <person name="Studholme D.J."/>
            <person name="Sun J."/>
            <person name="Viana C.J."/>
            <person name="Wallin E."/>
            <person name="Wang B."/>
            <person name="Wheeler C."/>
            <person name="Zhu H."/>
            <person name="Dean D.R."/>
            <person name="Dixon R."/>
            <person name="Wood D."/>
        </authorList>
    </citation>
    <scope>NUCLEOTIDE SEQUENCE [LARGE SCALE GENOMIC DNA]</scope>
    <source>
        <strain>DJ / ATCC BAA-1303</strain>
    </source>
</reference>
<comment type="function">
    <text evidence="1">Specifically methylates the pseudouridine at position 1915 (m3Psi1915) in 23S rRNA.</text>
</comment>
<comment type="catalytic activity">
    <reaction evidence="1">
        <text>pseudouridine(1915) in 23S rRNA + S-adenosyl-L-methionine = N(3)-methylpseudouridine(1915) in 23S rRNA + S-adenosyl-L-homocysteine + H(+)</text>
        <dbReference type="Rhea" id="RHEA:42752"/>
        <dbReference type="Rhea" id="RHEA-COMP:10221"/>
        <dbReference type="Rhea" id="RHEA-COMP:10222"/>
        <dbReference type="ChEBI" id="CHEBI:15378"/>
        <dbReference type="ChEBI" id="CHEBI:57856"/>
        <dbReference type="ChEBI" id="CHEBI:59789"/>
        <dbReference type="ChEBI" id="CHEBI:65314"/>
        <dbReference type="ChEBI" id="CHEBI:74486"/>
        <dbReference type="EC" id="2.1.1.177"/>
    </reaction>
</comment>
<comment type="subunit">
    <text evidence="1">Homodimer.</text>
</comment>
<comment type="subcellular location">
    <subcellularLocation>
        <location evidence="1">Cytoplasm</location>
    </subcellularLocation>
</comment>
<comment type="similarity">
    <text evidence="1">Belongs to the RNA methyltransferase RlmH family.</text>
</comment>
<protein>
    <recommendedName>
        <fullName evidence="1">Ribosomal RNA large subunit methyltransferase H</fullName>
        <ecNumber evidence="1">2.1.1.177</ecNumber>
    </recommendedName>
    <alternativeName>
        <fullName evidence="1">23S rRNA (pseudouridine1915-N3)-methyltransferase</fullName>
    </alternativeName>
    <alternativeName>
        <fullName evidence="1">23S rRNA m3Psi1915 methyltransferase</fullName>
    </alternativeName>
    <alternativeName>
        <fullName evidence="1">rRNA (pseudouridine-N3-)-methyltransferase RlmH</fullName>
    </alternativeName>
</protein>
<feature type="chain" id="PRO_1000212445" description="Ribosomal RNA large subunit methyltransferase H">
    <location>
        <begin position="1"/>
        <end position="155"/>
    </location>
</feature>
<feature type="binding site" evidence="1">
    <location>
        <position position="73"/>
    </location>
    <ligand>
        <name>S-adenosyl-L-methionine</name>
        <dbReference type="ChEBI" id="CHEBI:59789"/>
    </ligand>
</feature>
<feature type="binding site" evidence="1">
    <location>
        <position position="104"/>
    </location>
    <ligand>
        <name>S-adenosyl-L-methionine</name>
        <dbReference type="ChEBI" id="CHEBI:59789"/>
    </ligand>
</feature>
<feature type="binding site" evidence="1">
    <location>
        <begin position="123"/>
        <end position="128"/>
    </location>
    <ligand>
        <name>S-adenosyl-L-methionine</name>
        <dbReference type="ChEBI" id="CHEBI:59789"/>
    </ligand>
</feature>
<name>RLMH_AZOVD</name>
<sequence length="155" mass="17710">MRLRLIAVGSRMPRWVEEGWHEYARRLPPELALELLEIPLHTRSKNADVARLIRQEGEAMLGKVQPGERIVTLEVAGKSWSTEQLAAELERWRLDARTVNLMVGGPEGLAPEVCARSEQRWSLSPLTLPHPLVRILIGEQLYRAWTLLSGHPYHK</sequence>
<evidence type="ECO:0000255" key="1">
    <source>
        <dbReference type="HAMAP-Rule" id="MF_00658"/>
    </source>
</evidence>